<evidence type="ECO:0000255" key="1">
    <source>
        <dbReference type="HAMAP-Rule" id="MF_00229"/>
    </source>
</evidence>
<accession>A3NBH0</accession>
<feature type="chain" id="PRO_1000021553" description="Histidine ammonia-lyase">
    <location>
        <begin position="1"/>
        <end position="507"/>
    </location>
</feature>
<feature type="modified residue" description="2,3-didehydroalanine (Ser)" evidence="1">
    <location>
        <position position="142"/>
    </location>
</feature>
<feature type="cross-link" description="5-imidazolinone (Ala-Gly)" evidence="1">
    <location>
        <begin position="141"/>
        <end position="143"/>
    </location>
</feature>
<dbReference type="EC" id="4.3.1.3" evidence="1"/>
<dbReference type="EMBL" id="CP000570">
    <property type="protein sequence ID" value="ABN81542.1"/>
    <property type="molecule type" value="Genomic_DNA"/>
</dbReference>
<dbReference type="RefSeq" id="WP_011851919.1">
    <property type="nucleotide sequence ID" value="NC_009074.1"/>
</dbReference>
<dbReference type="SMR" id="A3NBH0"/>
<dbReference type="KEGG" id="bpd:BURPS668_2667"/>
<dbReference type="HOGENOM" id="CLU_014801_4_0_4"/>
<dbReference type="UniPathway" id="UPA00379">
    <property type="reaction ID" value="UER00549"/>
</dbReference>
<dbReference type="GO" id="GO:0005737">
    <property type="term" value="C:cytoplasm"/>
    <property type="evidence" value="ECO:0007669"/>
    <property type="project" value="UniProtKB-SubCell"/>
</dbReference>
<dbReference type="GO" id="GO:0004397">
    <property type="term" value="F:histidine ammonia-lyase activity"/>
    <property type="evidence" value="ECO:0007669"/>
    <property type="project" value="UniProtKB-UniRule"/>
</dbReference>
<dbReference type="GO" id="GO:0019556">
    <property type="term" value="P:L-histidine catabolic process to glutamate and formamide"/>
    <property type="evidence" value="ECO:0007669"/>
    <property type="project" value="UniProtKB-UniPathway"/>
</dbReference>
<dbReference type="GO" id="GO:0019557">
    <property type="term" value="P:L-histidine catabolic process to glutamate and formate"/>
    <property type="evidence" value="ECO:0007669"/>
    <property type="project" value="UniProtKB-UniPathway"/>
</dbReference>
<dbReference type="CDD" id="cd00332">
    <property type="entry name" value="PAL-HAL"/>
    <property type="match status" value="1"/>
</dbReference>
<dbReference type="FunFam" id="1.10.275.10:FF:000005">
    <property type="entry name" value="Histidine ammonia-lyase"/>
    <property type="match status" value="1"/>
</dbReference>
<dbReference type="FunFam" id="1.20.200.10:FF:000003">
    <property type="entry name" value="Histidine ammonia-lyase"/>
    <property type="match status" value="1"/>
</dbReference>
<dbReference type="Gene3D" id="1.20.200.10">
    <property type="entry name" value="Fumarase/aspartase (Central domain)"/>
    <property type="match status" value="1"/>
</dbReference>
<dbReference type="Gene3D" id="1.10.275.10">
    <property type="entry name" value="Fumarase/aspartase (N-terminal domain)"/>
    <property type="match status" value="1"/>
</dbReference>
<dbReference type="HAMAP" id="MF_00229">
    <property type="entry name" value="His_ammonia_lyase"/>
    <property type="match status" value="1"/>
</dbReference>
<dbReference type="InterPro" id="IPR001106">
    <property type="entry name" value="Aromatic_Lyase"/>
</dbReference>
<dbReference type="InterPro" id="IPR024083">
    <property type="entry name" value="Fumarase/histidase_N"/>
</dbReference>
<dbReference type="InterPro" id="IPR005921">
    <property type="entry name" value="HutH"/>
</dbReference>
<dbReference type="InterPro" id="IPR008948">
    <property type="entry name" value="L-Aspartase-like"/>
</dbReference>
<dbReference type="InterPro" id="IPR022313">
    <property type="entry name" value="Phe/His_NH3-lyase_AS"/>
</dbReference>
<dbReference type="NCBIfam" id="TIGR01225">
    <property type="entry name" value="hutH"/>
    <property type="match status" value="1"/>
</dbReference>
<dbReference type="NCBIfam" id="NF006871">
    <property type="entry name" value="PRK09367.1"/>
    <property type="match status" value="1"/>
</dbReference>
<dbReference type="PANTHER" id="PTHR10362">
    <property type="entry name" value="HISTIDINE AMMONIA-LYASE"/>
    <property type="match status" value="1"/>
</dbReference>
<dbReference type="Pfam" id="PF00221">
    <property type="entry name" value="Lyase_aromatic"/>
    <property type="match status" value="1"/>
</dbReference>
<dbReference type="SUPFAM" id="SSF48557">
    <property type="entry name" value="L-aspartase-like"/>
    <property type="match status" value="1"/>
</dbReference>
<dbReference type="PROSITE" id="PS00488">
    <property type="entry name" value="PAL_HISTIDASE"/>
    <property type="match status" value="1"/>
</dbReference>
<sequence length="507" mass="53081">MITLTPGRLTLPQLRRIARENVQIALDPASFAAIDRGAQAVADIAAKGEPAYGINTGFGRLASTHIPHDQLELLQKNLVLSHAVGVGEPMARPVVRLLMALKLSSLGRGHSGIRRVVMDALVALFNADVLPLIPVKGSVGASGDLAPLAHMSAVLLGIGDVFIRGERASAAEGLRVAGLAPLTLEAKEGLALLNGTQASTALALDNLFAIEDLYRTALVSGALSVDAAAGSVKPFDARIHELRGHRGQIDAAAAYRSLLDGSAINVSHRDCDKVQDPYSLRCQPQVMGACLDQIRHAAGVLLIEANAVSDNPLIFPDTGEVLSGGNFHAEPVAFAADNLAIAAAEIGALAERRIALLIDATLSGLPPFLVKDGGVNSGFMIAHVTAAALASENKTLAHPASVDSLPTSANQEDHVSMATFAARKLADIAENVANILAIELLAAAQGVDLRAPHATSPALQHAMKTIRADVAHYDLDHYFAPDIAVVARRVRERAFATLSPLSFESEQ</sequence>
<gene>
    <name evidence="1" type="primary">hutH</name>
    <name type="ordered locus">BURPS668_2667</name>
</gene>
<protein>
    <recommendedName>
        <fullName evidence="1">Histidine ammonia-lyase</fullName>
        <shortName evidence="1">Histidase</shortName>
        <ecNumber evidence="1">4.3.1.3</ecNumber>
    </recommendedName>
</protein>
<proteinExistence type="inferred from homology"/>
<name>HUTH_BURP6</name>
<comment type="catalytic activity">
    <reaction evidence="1">
        <text>L-histidine = trans-urocanate + NH4(+)</text>
        <dbReference type="Rhea" id="RHEA:21232"/>
        <dbReference type="ChEBI" id="CHEBI:17771"/>
        <dbReference type="ChEBI" id="CHEBI:28938"/>
        <dbReference type="ChEBI" id="CHEBI:57595"/>
        <dbReference type="EC" id="4.3.1.3"/>
    </reaction>
</comment>
<comment type="pathway">
    <text evidence="1">Amino-acid degradation; L-histidine degradation into L-glutamate; N-formimidoyl-L-glutamate from L-histidine: step 1/3.</text>
</comment>
<comment type="subcellular location">
    <subcellularLocation>
        <location evidence="1">Cytoplasm</location>
    </subcellularLocation>
</comment>
<comment type="PTM">
    <text evidence="1">Contains an active site 4-methylidene-imidazol-5-one (MIO), which is formed autocatalytically by cyclization and dehydration of residues Ala-Ser-Gly.</text>
</comment>
<comment type="similarity">
    <text evidence="1">Belongs to the PAL/histidase family.</text>
</comment>
<keyword id="KW-0963">Cytoplasm</keyword>
<keyword id="KW-0369">Histidine metabolism</keyword>
<keyword id="KW-0456">Lyase</keyword>
<reference key="1">
    <citation type="journal article" date="2010" name="Genome Biol. Evol.">
        <title>Continuing evolution of Burkholderia mallei through genome reduction and large-scale rearrangements.</title>
        <authorList>
            <person name="Losada L."/>
            <person name="Ronning C.M."/>
            <person name="DeShazer D."/>
            <person name="Woods D."/>
            <person name="Fedorova N."/>
            <person name="Kim H.S."/>
            <person name="Shabalina S.A."/>
            <person name="Pearson T.R."/>
            <person name="Brinkac L."/>
            <person name="Tan P."/>
            <person name="Nandi T."/>
            <person name="Crabtree J."/>
            <person name="Badger J."/>
            <person name="Beckstrom-Sternberg S."/>
            <person name="Saqib M."/>
            <person name="Schutzer S.E."/>
            <person name="Keim P."/>
            <person name="Nierman W.C."/>
        </authorList>
    </citation>
    <scope>NUCLEOTIDE SEQUENCE [LARGE SCALE GENOMIC DNA]</scope>
    <source>
        <strain>668</strain>
    </source>
</reference>
<organism>
    <name type="scientific">Burkholderia pseudomallei (strain 668)</name>
    <dbReference type="NCBI Taxonomy" id="320373"/>
    <lineage>
        <taxon>Bacteria</taxon>
        <taxon>Pseudomonadati</taxon>
        <taxon>Pseudomonadota</taxon>
        <taxon>Betaproteobacteria</taxon>
        <taxon>Burkholderiales</taxon>
        <taxon>Burkholderiaceae</taxon>
        <taxon>Burkholderia</taxon>
        <taxon>pseudomallei group</taxon>
    </lineage>
</organism>